<reference key="1">
    <citation type="journal article" date="2000" name="Mol. Biol. Cell">
        <title>The unique catalytic subunit of sperm cAMP-dependent protein kinase is the product of an alternative C-alpha mRNA expressed specifically in spermatogenic cells.</title>
        <authorList>
            <person name="San Agustin J.T."/>
            <person name="Wilkerson C.G."/>
            <person name="Witman G.B."/>
        </authorList>
    </citation>
    <scope>NUCLEOTIDE SEQUENCE [MRNA] (ISOFORMS 1 AND 2)</scope>
    <scope>TISSUE SPECIFICITY</scope>
    <source>
        <tissue>Testis</tissue>
    </source>
</reference>
<reference key="2">
    <citation type="journal article" date="1998" name="J. Biol. Chem.">
        <title>The catalytic subunit of the cAMP-dependent protein kinase of ovine sperm flagella has a unique amino-terminal sequence.</title>
        <authorList>
            <person name="San Agustin J.T."/>
            <person name="Leszyk J.D."/>
            <person name="Nuwaysir L.M."/>
            <person name="Witman G.B."/>
        </authorList>
    </citation>
    <scope>PARTIAL PROTEIN SEQUENCE (ISOFORM 2)</scope>
    <scope>TISSUE SPECIFICITY (ISOFORM 2)</scope>
    <source>
        <tissue>Sperm</tissue>
    </source>
</reference>
<proteinExistence type="evidence at protein level"/>
<sequence>MGNAAAAKKGSEQESVKEFLAKAKEDFLKKWENPAQNTAHLDQFERIKTLGTGSFGRVMLVKHTETGNHYAMKILDKQKVVKLKQIEHTLNEKRILQAVNFPFLVKLEFSFKDNSNLYMVMEYVPGGEMFSHLRRIGRFSEPHARFYAAQIVLTFEYLHSLDLIYRDLKPENLLIDQQGYIQVTDFGFAKRVKGRTWTLCGTPEYLAPEIILSKGYNKAVDWWALGVLIYEMAAGYPPFFADQPIQIYEKIVSGKVRFPSHFSSDLKDLLRNLLQVDLTKRFGNLKNGVNDIKNHKWFATTDWIAIYQRKVEAPFIPKFKGPGDTSNFDDYEEEEIRVSINEKCGKEFSEF</sequence>
<gene>
    <name type="primary">PRKACA</name>
</gene>
<evidence type="ECO:0000250" key="1"/>
<evidence type="ECO:0000250" key="2">
    <source>
        <dbReference type="UniProtKB" id="P00517"/>
    </source>
</evidence>
<evidence type="ECO:0000250" key="3">
    <source>
        <dbReference type="UniProtKB" id="P05132"/>
    </source>
</evidence>
<evidence type="ECO:0000250" key="4">
    <source>
        <dbReference type="UniProtKB" id="P17612"/>
    </source>
</evidence>
<evidence type="ECO:0000250" key="5">
    <source>
        <dbReference type="UniProtKB" id="P27791"/>
    </source>
</evidence>
<evidence type="ECO:0000255" key="6">
    <source>
        <dbReference type="PROSITE-ProRule" id="PRU00159"/>
    </source>
</evidence>
<evidence type="ECO:0000255" key="7">
    <source>
        <dbReference type="PROSITE-ProRule" id="PRU00618"/>
    </source>
</evidence>
<evidence type="ECO:0000255" key="8">
    <source>
        <dbReference type="PROSITE-ProRule" id="PRU10027"/>
    </source>
</evidence>
<evidence type="ECO:0000269" key="9">
    <source>
    </source>
</evidence>
<evidence type="ECO:0000269" key="10">
    <source>
    </source>
</evidence>
<evidence type="ECO:0000303" key="11">
    <source>
    </source>
</evidence>
<evidence type="ECO:0000305" key="12"/>
<feature type="initiator methionine" description="Removed" evidence="2">
    <location>
        <position position="1"/>
    </location>
</feature>
<feature type="chain" id="PRO_0000086056" description="cAMP-dependent protein kinase catalytic subunit alpha">
    <location>
        <begin position="2"/>
        <end position="351"/>
    </location>
</feature>
<feature type="domain" description="Protein kinase" evidence="6">
    <location>
        <begin position="44"/>
        <end position="298"/>
    </location>
</feature>
<feature type="domain" description="AGC-kinase C-terminal" evidence="7">
    <location>
        <begin position="299"/>
        <end position="351"/>
    </location>
</feature>
<feature type="active site" description="Proton acceptor" evidence="6 8">
    <location>
        <position position="167"/>
    </location>
</feature>
<feature type="binding site" evidence="6">
    <location>
        <begin position="50"/>
        <end position="58"/>
    </location>
    <ligand>
        <name>ATP</name>
        <dbReference type="ChEBI" id="CHEBI:30616"/>
    </ligand>
</feature>
<feature type="binding site" evidence="6">
    <location>
        <position position="73"/>
    </location>
    <ligand>
        <name>ATP</name>
        <dbReference type="ChEBI" id="CHEBI:30616"/>
    </ligand>
</feature>
<feature type="binding site" evidence="6">
    <location>
        <begin position="122"/>
        <end position="128"/>
    </location>
    <ligand>
        <name>ATP</name>
        <dbReference type="ChEBI" id="CHEBI:30616"/>
    </ligand>
</feature>
<feature type="binding site" evidence="6">
    <location>
        <begin position="169"/>
        <end position="172"/>
    </location>
    <ligand>
        <name>ATP</name>
        <dbReference type="ChEBI" id="CHEBI:30616"/>
    </ligand>
</feature>
<feature type="modified residue" description="Deamidated asparagine" evidence="3">
    <location>
        <position position="3"/>
    </location>
</feature>
<feature type="modified residue" description="Phosphoserine; by autocatalysis" evidence="3">
    <location>
        <position position="11"/>
    </location>
</feature>
<feature type="modified residue" description="Phosphothreonine" evidence="4">
    <location>
        <position position="49"/>
    </location>
</feature>
<feature type="modified residue" description="Phosphoserine" evidence="3">
    <location>
        <position position="140"/>
    </location>
</feature>
<feature type="modified residue" description="Phosphothreonine" evidence="4">
    <location>
        <position position="196"/>
    </location>
</feature>
<feature type="modified residue" description="Phosphothreonine; by PDPK1" evidence="2">
    <location>
        <position position="198"/>
    </location>
</feature>
<feature type="modified residue" description="Phosphotyrosine" evidence="3">
    <location>
        <position position="331"/>
    </location>
</feature>
<feature type="modified residue" description="Phosphoserine" evidence="2">
    <location>
        <position position="339"/>
    </location>
</feature>
<feature type="lipid moiety-binding region" description="N-myristoyl glycine" evidence="4">
    <location>
        <position position="2"/>
    </location>
</feature>
<feature type="splice variant" id="VSP_008016" description="In isoform 2." evidence="11">
    <original>MGNAAAAKKGSEQES</original>
    <variation>MASNPND</variation>
    <location>
        <begin position="1"/>
        <end position="15"/>
    </location>
</feature>
<dbReference type="EC" id="2.7.11.11"/>
<dbReference type="EMBL" id="AF238979">
    <property type="protein sequence ID" value="AAF76423.1"/>
    <property type="molecule type" value="mRNA"/>
</dbReference>
<dbReference type="EMBL" id="AF238980">
    <property type="protein sequence ID" value="AAF76424.1"/>
    <property type="molecule type" value="mRNA"/>
</dbReference>
<dbReference type="RefSeq" id="NP_001009234.1">
    <molecule id="Q9MZD9-1"/>
    <property type="nucleotide sequence ID" value="NM_001009234.1"/>
</dbReference>
<dbReference type="RefSeq" id="XP_027824990.1">
    <molecule id="Q9MZD9-2"/>
    <property type="nucleotide sequence ID" value="XM_027969189.3"/>
</dbReference>
<dbReference type="SMR" id="Q9MZD9"/>
<dbReference type="STRING" id="9940.ENSOARP00000006933"/>
<dbReference type="PaxDb" id="9940-ENSOARP00000006933"/>
<dbReference type="Ensembl" id="ENSOART00215035339">
    <molecule id="Q9MZD9-1"/>
    <property type="protein sequence ID" value="ENSOARP00215018394"/>
    <property type="gene ID" value="ENSOARG00215021178"/>
</dbReference>
<dbReference type="Ensembl" id="ENSOART00220095006">
    <molecule id="Q9MZD9-1"/>
    <property type="protein sequence ID" value="ENSOARP00220050025"/>
    <property type="gene ID" value="ENSOARG00220057472"/>
</dbReference>
<dbReference type="Ensembl" id="ENSOART00225088861">
    <molecule id="Q9MZD9-1"/>
    <property type="protein sequence ID" value="ENSOARP00225047056"/>
    <property type="gene ID" value="ENSOARG00225053210"/>
</dbReference>
<dbReference type="GeneID" id="443094"/>
<dbReference type="KEGG" id="oas:443094"/>
<dbReference type="CTD" id="5566"/>
<dbReference type="eggNOG" id="KOG0616">
    <property type="taxonomic scope" value="Eukaryota"/>
</dbReference>
<dbReference type="OrthoDB" id="63267at2759"/>
<dbReference type="Proteomes" id="UP000002356">
    <property type="component" value="Unplaced"/>
</dbReference>
<dbReference type="GO" id="GO:0001669">
    <property type="term" value="C:acrosomal vesicle"/>
    <property type="evidence" value="ECO:0000250"/>
    <property type="project" value="UniProtKB"/>
</dbReference>
<dbReference type="GO" id="GO:0005952">
    <property type="term" value="C:cAMP-dependent protein kinase complex"/>
    <property type="evidence" value="ECO:0007669"/>
    <property type="project" value="TreeGrafter"/>
</dbReference>
<dbReference type="GO" id="GO:0005737">
    <property type="term" value="C:cytoplasm"/>
    <property type="evidence" value="ECO:0000250"/>
    <property type="project" value="UniProtKB"/>
</dbReference>
<dbReference type="GO" id="GO:0005829">
    <property type="term" value="C:cytosol"/>
    <property type="evidence" value="ECO:0007669"/>
    <property type="project" value="TreeGrafter"/>
</dbReference>
<dbReference type="GO" id="GO:0005739">
    <property type="term" value="C:mitochondrion"/>
    <property type="evidence" value="ECO:0007669"/>
    <property type="project" value="UniProtKB-SubCell"/>
</dbReference>
<dbReference type="GO" id="GO:0005634">
    <property type="term" value="C:nucleus"/>
    <property type="evidence" value="ECO:0000250"/>
    <property type="project" value="UniProtKB"/>
</dbReference>
<dbReference type="GO" id="GO:0048471">
    <property type="term" value="C:perinuclear region of cytoplasm"/>
    <property type="evidence" value="ECO:0000250"/>
    <property type="project" value="UniProtKB"/>
</dbReference>
<dbReference type="GO" id="GO:0005886">
    <property type="term" value="C:plasma membrane"/>
    <property type="evidence" value="ECO:0007669"/>
    <property type="project" value="UniProtKB-SubCell"/>
</dbReference>
<dbReference type="GO" id="GO:0036126">
    <property type="term" value="C:sperm flagellum"/>
    <property type="evidence" value="ECO:0000250"/>
    <property type="project" value="UniProtKB"/>
</dbReference>
<dbReference type="GO" id="GO:0097225">
    <property type="term" value="C:sperm midpiece"/>
    <property type="evidence" value="ECO:0000250"/>
    <property type="project" value="UniProtKB"/>
</dbReference>
<dbReference type="GO" id="GO:0005524">
    <property type="term" value="F:ATP binding"/>
    <property type="evidence" value="ECO:0007669"/>
    <property type="project" value="UniProtKB-KW"/>
</dbReference>
<dbReference type="GO" id="GO:0004691">
    <property type="term" value="F:cAMP-dependent protein kinase activity"/>
    <property type="evidence" value="ECO:0007669"/>
    <property type="project" value="UniProtKB-EC"/>
</dbReference>
<dbReference type="GO" id="GO:0034237">
    <property type="term" value="F:protein kinase A regulatory subunit binding"/>
    <property type="evidence" value="ECO:0007669"/>
    <property type="project" value="TreeGrafter"/>
</dbReference>
<dbReference type="GO" id="GO:0106310">
    <property type="term" value="F:protein serine kinase activity"/>
    <property type="evidence" value="ECO:0007669"/>
    <property type="project" value="RHEA"/>
</dbReference>
<dbReference type="GO" id="GO:0004674">
    <property type="term" value="F:protein serine/threonine kinase activity"/>
    <property type="evidence" value="ECO:0000250"/>
    <property type="project" value="UniProtKB"/>
</dbReference>
<dbReference type="GO" id="GO:0034605">
    <property type="term" value="P:cellular response to heat"/>
    <property type="evidence" value="ECO:0000250"/>
    <property type="project" value="UniProtKB"/>
</dbReference>
<dbReference type="GO" id="GO:1904262">
    <property type="term" value="P:negative regulation of TORC1 signaling"/>
    <property type="evidence" value="ECO:0000250"/>
    <property type="project" value="UniProtKB"/>
</dbReference>
<dbReference type="CDD" id="cd14209">
    <property type="entry name" value="STKc_PKA"/>
    <property type="match status" value="1"/>
</dbReference>
<dbReference type="FunFam" id="3.30.200.20:FF:000005">
    <property type="entry name" value="cAMP-dependent protein kinase catalytic subunit"/>
    <property type="match status" value="1"/>
</dbReference>
<dbReference type="FunFam" id="1.10.510.10:FF:000005">
    <property type="entry name" value="cAMP-dependent protein kinase catalytic subunit alpha"/>
    <property type="match status" value="1"/>
</dbReference>
<dbReference type="Gene3D" id="3.30.200.20">
    <property type="entry name" value="Phosphorylase Kinase, domain 1"/>
    <property type="match status" value="1"/>
</dbReference>
<dbReference type="Gene3D" id="1.10.510.10">
    <property type="entry name" value="Transferase(Phosphotransferase) domain 1"/>
    <property type="match status" value="1"/>
</dbReference>
<dbReference type="InterPro" id="IPR000961">
    <property type="entry name" value="AGC-kinase_C"/>
</dbReference>
<dbReference type="InterPro" id="IPR011009">
    <property type="entry name" value="Kinase-like_dom_sf"/>
</dbReference>
<dbReference type="InterPro" id="IPR000719">
    <property type="entry name" value="Prot_kinase_dom"/>
</dbReference>
<dbReference type="InterPro" id="IPR017441">
    <property type="entry name" value="Protein_kinase_ATP_BS"/>
</dbReference>
<dbReference type="InterPro" id="IPR008271">
    <property type="entry name" value="Ser/Thr_kinase_AS"/>
</dbReference>
<dbReference type="InterPro" id="IPR044109">
    <property type="entry name" value="STKc_PKA"/>
</dbReference>
<dbReference type="PANTHER" id="PTHR24353:SF82">
    <property type="entry name" value="CAMP-DEPENDENT PROTEIN KINASE CATALYTIC SUBUNIT ALPHA"/>
    <property type="match status" value="1"/>
</dbReference>
<dbReference type="PANTHER" id="PTHR24353">
    <property type="entry name" value="CYCLIC NUCLEOTIDE-DEPENDENT PROTEIN KINASE"/>
    <property type="match status" value="1"/>
</dbReference>
<dbReference type="Pfam" id="PF00069">
    <property type="entry name" value="Pkinase"/>
    <property type="match status" value="1"/>
</dbReference>
<dbReference type="SMART" id="SM00133">
    <property type="entry name" value="S_TK_X"/>
    <property type="match status" value="1"/>
</dbReference>
<dbReference type="SMART" id="SM00220">
    <property type="entry name" value="S_TKc"/>
    <property type="match status" value="1"/>
</dbReference>
<dbReference type="SUPFAM" id="SSF56112">
    <property type="entry name" value="Protein kinase-like (PK-like)"/>
    <property type="match status" value="1"/>
</dbReference>
<dbReference type="PROSITE" id="PS51285">
    <property type="entry name" value="AGC_KINASE_CTER"/>
    <property type="match status" value="1"/>
</dbReference>
<dbReference type="PROSITE" id="PS00107">
    <property type="entry name" value="PROTEIN_KINASE_ATP"/>
    <property type="match status" value="1"/>
</dbReference>
<dbReference type="PROSITE" id="PS50011">
    <property type="entry name" value="PROTEIN_KINASE_DOM"/>
    <property type="match status" value="1"/>
</dbReference>
<dbReference type="PROSITE" id="PS00108">
    <property type="entry name" value="PROTEIN_KINASE_ST"/>
    <property type="match status" value="1"/>
</dbReference>
<accession>Q9MZD9</accession>
<accession>Q9MZD8</accession>
<protein>
    <recommendedName>
        <fullName>cAMP-dependent protein kinase catalytic subunit alpha</fullName>
        <shortName>PKA C-alpha</shortName>
        <ecNumber>2.7.11.11</ecNumber>
    </recommendedName>
</protein>
<name>KAPCA_SHEEP</name>
<comment type="function">
    <text evidence="3 4 5">Phosphorylates a large number of substrates in the cytoplasm and the nucleus (By similarity). Phosphorylates CDC25B, ABL1, NFKB1, CLDN3, PSMC5/RPT6, PJA2, RYR2, RORA, SOX9 and VASP (By similarity). Regulates the abundance of compartmentalized pools of its regulatory subunits through phosphorylation of PJA2 which binds and ubiquitinates these subunits, leading to their subsequent proteolysis. RORA is activated by phosphorylation. Required for glucose-mediated adipogenic differentiation increase and osteogenic differentiation inhibition from osteoblasts (By similarity). Involved in chondrogenesis by mediating phosphorylation of SOX9 (By similarity). Involved in the regulation of platelets in response to thrombin and collagen; maintains circulating platelets in a resting state by phosphorylating proteins in numerous platelet inhibitory pathways when in complex with NF-kappa-B (NFKB1 and NFKB2) and I-kappa-B-alpha (NFKBIA), but thrombin and collagen disrupt these complexes and free active PRKACA stimulates platelets and leads to platelet aggregation by phosphorylating VASP. RYR2 channel activity is potentiated by phosphorylation in presence of luminal Ca(2+), leading to reduced amplitude and increased frequency of store overload-induced Ca(2+) release (SOICR) characterized by an increased rate of Ca(2+) release and propagation velocity of spontaneous Ca(2+) waves, despite reduced wave amplitude and resting cytosolic Ca(2+). PSMC5/RPT6 activation by phosphorylation stimulates proteasome. Negatively regulates tight junctions (TJs) in ovarian cancer cells via CLDN3 phosphorylation. NFKB1 phosphorylation promotes NF-kappa-B p50-p50 DNA binding. Required for phosphorylation of GLI transcription factors which inhibits them and prevents transcriptional activation of Hedgehog signaling pathway target genes (By similarity). GLI transcription factor phosphorylation is inhibited by interaction of PRKACA with SMO which sequesters PRKACA at the cell membrane (By similarity). Involved in embryonic development by down-regulating the Hedgehog (Hh) signaling pathway that determines embryo pattern formation and morphogenesis most probably through the regulation of OFD1 in ciliogenesis (By similarity). Prevents meiosis resumption in prophase-arrested oocytes via CDC25B inactivation by phosphorylation (By similarity). May also regulate rapid eye movement (REM) sleep in the pedunculopontine tegmental (PPT) (By similarity). Phosphorylates APOBEC3G and AICDA. Phosphorylates HSF1; this phosphorylation promotes HSF1 nuclear localization and transcriptional activity upon heat shock (By similarity). Acts as a negative regulator of mTORC1 by mediating phosphorylation of RPTOR (By similarity).</text>
</comment>
<comment type="catalytic activity">
    <reaction>
        <text>L-seryl-[protein] + ATP = O-phospho-L-seryl-[protein] + ADP + H(+)</text>
        <dbReference type="Rhea" id="RHEA:17989"/>
        <dbReference type="Rhea" id="RHEA-COMP:9863"/>
        <dbReference type="Rhea" id="RHEA-COMP:11604"/>
        <dbReference type="ChEBI" id="CHEBI:15378"/>
        <dbReference type="ChEBI" id="CHEBI:29999"/>
        <dbReference type="ChEBI" id="CHEBI:30616"/>
        <dbReference type="ChEBI" id="CHEBI:83421"/>
        <dbReference type="ChEBI" id="CHEBI:456216"/>
        <dbReference type="EC" id="2.7.11.11"/>
    </reaction>
</comment>
<comment type="catalytic activity">
    <reaction>
        <text>L-threonyl-[protein] + ATP = O-phospho-L-threonyl-[protein] + ADP + H(+)</text>
        <dbReference type="Rhea" id="RHEA:46608"/>
        <dbReference type="Rhea" id="RHEA-COMP:11060"/>
        <dbReference type="Rhea" id="RHEA-COMP:11605"/>
        <dbReference type="ChEBI" id="CHEBI:15378"/>
        <dbReference type="ChEBI" id="CHEBI:30013"/>
        <dbReference type="ChEBI" id="CHEBI:30616"/>
        <dbReference type="ChEBI" id="CHEBI:61977"/>
        <dbReference type="ChEBI" id="CHEBI:456216"/>
        <dbReference type="EC" id="2.7.11.11"/>
    </reaction>
</comment>
<comment type="activity regulation">
    <text>Allosterically activated by various compounds, including ATP. Activated by cAMP; the nucleotide acts as a dynamic and allosteric activator by coupling the two lobes of apo PKA, enhancing the enzyme dynamics synchronously and priming it for catalysis.</text>
</comment>
<comment type="subunit">
    <text evidence="3 4">A number of inactive tetrameric holoenzymes are produced by the combination of homo- or heterodimers of the different regulatory subunits associated with two catalytic subunits. cAMP causes the dissociation of the inactive holoenzyme into a dimer of regulatory subunits bound to four cAMP and two free monomeric catalytic subunits. The cAMP-dependent protein kinase catalytic subunit binds PJA2. Both isoforms 1 and 2 forms activate cAMP-sensitive PKAI and PKAII holoenzymes by interacting with regulatory subunit (R) of PKA, PRKAR1A/PKR1 and PRKAR2A/PKR2, respectively. Interacts with NFKB1, NFKB2 and NFKBIA in platelets; these interactions are disrupted by thrombin and collagen. Binds to ABL1 in spermatozoa and with CDC25B in oocytes (By similarity) Interacts with APOBEC3G and AICDA (By similarity). Interacts with RAB13; downstream effector of RAB13 involved in tight junction assembly (By similarity). Found in a complex at least composed of MROH2B, PRKACA isoform 2 and TCP11 (By similarity). Interacts with MROH2B (By similarity). Interacts with HSF1 (By similarity). Isoform 2 interacts with TCP11 (By similarity). Interacts with TBC1D31; in the regulation of OFD1 (By similarity). Interacts in free form with SMO (via C-terminus); the interaction leads to sequestration of PRKACA at the membrane, preventing PRKACA-mediated phosphorylation of GLI transcription factors (By similarity).</text>
</comment>
<comment type="subcellular location">
    <subcellularLocation>
        <location evidence="4">Cytoplasm</location>
    </subcellularLocation>
    <subcellularLocation>
        <location evidence="4">Cell membrane</location>
    </subcellularLocation>
    <subcellularLocation>
        <location evidence="4">Membrane</location>
        <topology evidence="4">Lipid-anchor</topology>
    </subcellularLocation>
    <subcellularLocation>
        <location evidence="4">Nucleus</location>
    </subcellularLocation>
    <subcellularLocation>
        <location evidence="3">Mitochondrion</location>
    </subcellularLocation>
    <text evidence="3 4">Translocates into the nucleus (monomeric catalytic subunit). The inactive holoenzyme is found in the cytoplasm. Distributed throughout the cytoplasm in meiotically incompetent oocytes. Associated to mitochondrion as meiotic competence is acquired. Aggregates around the germinal vesicles (GV) at the immature GV stage oocytes (By similarity). Colocalizes with HSF1 in nuclear stress bodies (nSBs) upon heat shock (By similarity). Recruited to the cell membrane through interaction with SMO (By similarity).</text>
</comment>
<comment type="subcellular location">
    <molecule>Isoform 2</molecule>
    <subcellularLocation>
        <location evidence="3">Cell projection</location>
        <location evidence="3">Cilium</location>
        <location evidence="3">Flagellum</location>
    </subcellularLocation>
    <subcellularLocation>
        <location evidence="3">Cytoplasmic vesicle</location>
        <location evidence="3">Secretory vesicle</location>
        <location evidence="3">Acrosome</location>
    </subcellularLocation>
    <text evidence="1 3">Expressed in the midpiece region of the sperm flagellum (By similarity). Colocalizes with MROH2B and TCP11 on the acrosome and tail regions in round spermatids and spermatozoa regardless of the capacitation status of the sperm (By similarity).</text>
</comment>
<comment type="alternative products">
    <event type="alternative splicing"/>
    <isoform>
        <id>Q9MZD9-1</id>
        <name>1</name>
        <name>C alpha1</name>
        <sequence type="displayed"/>
    </isoform>
    <isoform>
        <id>Q9MZD9-2</id>
        <name>2</name>
        <name>Cs</name>
        <sequence type="described" ref="VSP_008016"/>
    </isoform>
</comment>
<comment type="tissue specificity">
    <molecule>Isoform 1</molecule>
    <text evidence="9">Predominant somatic isoform.</text>
</comment>
<comment type="tissue specificity">
    <molecule>Isoform 2</molecule>
    <text evidence="9 10">Sperm-specific.</text>
</comment>
<comment type="PTM">
    <text evidence="3 4">Autophosphorylated. Phosphorylation is enhanced by vitamin K(2). Phosphorylated on threonine and serine residues. Phosphorylation on Thr-198 is required for full activity (By similarity). Phosphorylated at Tyr-331 by activated receptor tyrosine kinases EGFR and PDGFR; this increases catalytic efficiency (By similarity).</text>
</comment>
<comment type="PTM">
    <text evidence="3">Asn-3 is partially deaminated to Asp-3 giving rise to 2 major isoelectric variants, called CB and CA respectively.</text>
</comment>
<comment type="PTM">
    <text evidence="3">When myristoylated, Ser-11 is autophosphorylated probably in conjunction with deamidation of Asn-3.</text>
</comment>
<comment type="similarity">
    <text evidence="12">Belongs to the protein kinase superfamily. AGC Ser/Thr protein kinase family. cAMP subfamily.</text>
</comment>
<keyword id="KW-0025">Alternative splicing</keyword>
<keyword id="KW-0067">ATP-binding</keyword>
<keyword id="KW-0114">cAMP</keyword>
<keyword id="KW-1003">Cell membrane</keyword>
<keyword id="KW-0966">Cell projection</keyword>
<keyword id="KW-0969">Cilium</keyword>
<keyword id="KW-0963">Cytoplasm</keyword>
<keyword id="KW-0968">Cytoplasmic vesicle</keyword>
<keyword id="KW-0903">Direct protein sequencing</keyword>
<keyword id="KW-0282">Flagellum</keyword>
<keyword id="KW-0418">Kinase</keyword>
<keyword id="KW-0449">Lipoprotein</keyword>
<keyword id="KW-0472">Membrane</keyword>
<keyword id="KW-0496">Mitochondrion</keyword>
<keyword id="KW-0519">Myristate</keyword>
<keyword id="KW-0547">Nucleotide-binding</keyword>
<keyword id="KW-0539">Nucleus</keyword>
<keyword id="KW-0597">Phosphoprotein</keyword>
<keyword id="KW-1185">Reference proteome</keyword>
<keyword id="KW-0723">Serine/threonine-protein kinase</keyword>
<keyword id="KW-0808">Transferase</keyword>
<organism>
    <name type="scientific">Ovis aries</name>
    <name type="common">Sheep</name>
    <dbReference type="NCBI Taxonomy" id="9940"/>
    <lineage>
        <taxon>Eukaryota</taxon>
        <taxon>Metazoa</taxon>
        <taxon>Chordata</taxon>
        <taxon>Craniata</taxon>
        <taxon>Vertebrata</taxon>
        <taxon>Euteleostomi</taxon>
        <taxon>Mammalia</taxon>
        <taxon>Eutheria</taxon>
        <taxon>Laurasiatheria</taxon>
        <taxon>Artiodactyla</taxon>
        <taxon>Ruminantia</taxon>
        <taxon>Pecora</taxon>
        <taxon>Bovidae</taxon>
        <taxon>Caprinae</taxon>
        <taxon>Ovis</taxon>
    </lineage>
</organism>